<evidence type="ECO:0000255" key="1">
    <source>
        <dbReference type="HAMAP-Rule" id="MF_02115"/>
    </source>
</evidence>
<sequence length="142" mass="15892">MTTVVAQGTFDLLHPGHLHYLREAAGMGDQLHVILARRENVTHKDPPILPNEQRREMVAALDPVDEAIVGHDDDIFIPVERIDPDLLVLGYDQHHDRGDIADALAERGIDCVVRRASEYEPGYEGAVLSTGRIVERILETRD</sequence>
<feature type="chain" id="PRO_0000406240" description="FAD synthase">
    <location>
        <begin position="1"/>
        <end position="142"/>
    </location>
</feature>
<feature type="binding site" evidence="1">
    <location>
        <begin position="9"/>
        <end position="10"/>
    </location>
    <ligand>
        <name>ATP</name>
        <dbReference type="ChEBI" id="CHEBI:30616"/>
    </ligand>
</feature>
<feature type="binding site" evidence="1">
    <location>
        <begin position="14"/>
        <end position="17"/>
    </location>
    <ligand>
        <name>ATP</name>
        <dbReference type="ChEBI" id="CHEBI:30616"/>
    </ligand>
</feature>
<feature type="binding site" evidence="1">
    <location>
        <position position="92"/>
    </location>
    <ligand>
        <name>ATP</name>
        <dbReference type="ChEBI" id="CHEBI:30616"/>
    </ligand>
</feature>
<feature type="binding site" evidence="1">
    <location>
        <position position="119"/>
    </location>
    <ligand>
        <name>ATP</name>
        <dbReference type="ChEBI" id="CHEBI:30616"/>
    </ligand>
</feature>
<gene>
    <name evidence="1" type="primary">ribL</name>
    <name type="ordered locus">Huta_0715</name>
</gene>
<proteinExistence type="inferred from homology"/>
<comment type="function">
    <text evidence="1">Catalyzes the transfer of the AMP portion of ATP to flavin mononucleotide (FMN) to produce flavin adenine dinucleotide (FAD) coenzyme.</text>
</comment>
<comment type="catalytic activity">
    <reaction evidence="1">
        <text>FMN + ATP + H(+) = FAD + diphosphate</text>
        <dbReference type="Rhea" id="RHEA:17237"/>
        <dbReference type="ChEBI" id="CHEBI:15378"/>
        <dbReference type="ChEBI" id="CHEBI:30616"/>
        <dbReference type="ChEBI" id="CHEBI:33019"/>
        <dbReference type="ChEBI" id="CHEBI:57692"/>
        <dbReference type="ChEBI" id="CHEBI:58210"/>
        <dbReference type="EC" id="2.7.7.2"/>
    </reaction>
</comment>
<comment type="cofactor">
    <cofactor evidence="1">
        <name>a divalent metal cation</name>
        <dbReference type="ChEBI" id="CHEBI:60240"/>
    </cofactor>
</comment>
<comment type="pathway">
    <text evidence="1">Cofactor biosynthesis; FAD biosynthesis; FAD from FMN: step 1/1.</text>
</comment>
<comment type="subunit">
    <text evidence="1">Homodimer.</text>
</comment>
<comment type="similarity">
    <text evidence="1">Belongs to the archaeal FAD synthase family.</text>
</comment>
<organism>
    <name type="scientific">Halorhabdus utahensis (strain DSM 12940 / JCM 11049 / AX-2)</name>
    <dbReference type="NCBI Taxonomy" id="519442"/>
    <lineage>
        <taxon>Archaea</taxon>
        <taxon>Methanobacteriati</taxon>
        <taxon>Methanobacteriota</taxon>
        <taxon>Stenosarchaea group</taxon>
        <taxon>Halobacteria</taxon>
        <taxon>Halobacteriales</taxon>
        <taxon>Haloarculaceae</taxon>
        <taxon>Halorhabdus</taxon>
    </lineage>
</organism>
<keyword id="KW-0067">ATP-binding</keyword>
<keyword id="KW-0274">FAD</keyword>
<keyword id="KW-0285">Flavoprotein</keyword>
<keyword id="KW-0288">FMN</keyword>
<keyword id="KW-0547">Nucleotide-binding</keyword>
<keyword id="KW-0548">Nucleotidyltransferase</keyword>
<keyword id="KW-1185">Reference proteome</keyword>
<keyword id="KW-0808">Transferase</keyword>
<accession>C7NTR1</accession>
<reference key="1">
    <citation type="journal article" date="2009" name="Stand. Genomic Sci.">
        <title>Complete genome sequence of Halorhabdus utahensis type strain (AX-2).</title>
        <authorList>
            <person name="Anderson I."/>
            <person name="Tindall B.J."/>
            <person name="Pomrenke H."/>
            <person name="Goker M."/>
            <person name="Lapidus A."/>
            <person name="Nolan M."/>
            <person name="Copeland A."/>
            <person name="Glavina Del Rio T."/>
            <person name="Chen F."/>
            <person name="Tice H."/>
            <person name="Cheng J.F."/>
            <person name="Lucas S."/>
            <person name="Chertkov O."/>
            <person name="Bruce D."/>
            <person name="Brettin T."/>
            <person name="Detter J.C."/>
            <person name="Han C."/>
            <person name="Goodwin L."/>
            <person name="Land M."/>
            <person name="Hauser L."/>
            <person name="Chang Y.J."/>
            <person name="Jeffries C.D."/>
            <person name="Pitluck S."/>
            <person name="Pati A."/>
            <person name="Mavromatis K."/>
            <person name="Ivanova N."/>
            <person name="Ovchinnikova G."/>
            <person name="Chen A."/>
            <person name="Palaniappan K."/>
            <person name="Chain P."/>
            <person name="Rohde M."/>
            <person name="Bristow J."/>
            <person name="Eisen J.A."/>
            <person name="Markowitz V."/>
            <person name="Hugenholtz P."/>
            <person name="Kyrpides N.C."/>
            <person name="Klenk H.P."/>
        </authorList>
    </citation>
    <scope>NUCLEOTIDE SEQUENCE [LARGE SCALE GENOMIC DNA]</scope>
    <source>
        <strain>DSM 12940 / JCM 11049 / AX-2</strain>
    </source>
</reference>
<protein>
    <recommendedName>
        <fullName evidence="1">FAD synthase</fullName>
        <ecNumber evidence="1">2.7.7.2</ecNumber>
    </recommendedName>
    <alternativeName>
        <fullName evidence="1">FMN adenylyltransferase</fullName>
    </alternativeName>
    <alternativeName>
        <fullName evidence="1">Flavin adenine dinucleotide synthase</fullName>
    </alternativeName>
</protein>
<name>RIBL_HALUD</name>
<dbReference type="EC" id="2.7.7.2" evidence="1"/>
<dbReference type="EMBL" id="CP001687">
    <property type="protein sequence ID" value="ACV10900.1"/>
    <property type="molecule type" value="Genomic_DNA"/>
</dbReference>
<dbReference type="RefSeq" id="WP_015788480.1">
    <property type="nucleotide sequence ID" value="NC_013158.1"/>
</dbReference>
<dbReference type="SMR" id="C7NTR1"/>
<dbReference type="STRING" id="519442.Huta_0715"/>
<dbReference type="GeneID" id="8382984"/>
<dbReference type="KEGG" id="hut:Huta_0715"/>
<dbReference type="eggNOG" id="arCOG01222">
    <property type="taxonomic scope" value="Archaea"/>
</dbReference>
<dbReference type="HOGENOM" id="CLU_034585_2_1_2"/>
<dbReference type="OrthoDB" id="1912at2157"/>
<dbReference type="UniPathway" id="UPA00277">
    <property type="reaction ID" value="UER00407"/>
</dbReference>
<dbReference type="Proteomes" id="UP000002071">
    <property type="component" value="Chromosome"/>
</dbReference>
<dbReference type="GO" id="GO:0005524">
    <property type="term" value="F:ATP binding"/>
    <property type="evidence" value="ECO:0007669"/>
    <property type="project" value="UniProtKB-UniRule"/>
</dbReference>
<dbReference type="GO" id="GO:0003919">
    <property type="term" value="F:FMN adenylyltransferase activity"/>
    <property type="evidence" value="ECO:0007669"/>
    <property type="project" value="UniProtKB-UniRule"/>
</dbReference>
<dbReference type="GO" id="GO:0006747">
    <property type="term" value="P:FAD biosynthetic process"/>
    <property type="evidence" value="ECO:0007669"/>
    <property type="project" value="UniProtKB-UniRule"/>
</dbReference>
<dbReference type="GO" id="GO:0046444">
    <property type="term" value="P:FMN metabolic process"/>
    <property type="evidence" value="ECO:0007669"/>
    <property type="project" value="UniProtKB-UniRule"/>
</dbReference>
<dbReference type="CDD" id="cd02170">
    <property type="entry name" value="cytidylyltransferase"/>
    <property type="match status" value="1"/>
</dbReference>
<dbReference type="Gene3D" id="3.40.50.620">
    <property type="entry name" value="HUPs"/>
    <property type="match status" value="1"/>
</dbReference>
<dbReference type="HAMAP" id="MF_02115">
    <property type="entry name" value="FAD_synth_arch"/>
    <property type="match status" value="1"/>
</dbReference>
<dbReference type="InterPro" id="IPR050385">
    <property type="entry name" value="Archaeal_FAD_synthase"/>
</dbReference>
<dbReference type="InterPro" id="IPR004821">
    <property type="entry name" value="Cyt_trans-like"/>
</dbReference>
<dbReference type="InterPro" id="IPR024902">
    <property type="entry name" value="FAD_synth_RibL"/>
</dbReference>
<dbReference type="InterPro" id="IPR014729">
    <property type="entry name" value="Rossmann-like_a/b/a_fold"/>
</dbReference>
<dbReference type="NCBIfam" id="TIGR00125">
    <property type="entry name" value="cyt_tran_rel"/>
    <property type="match status" value="1"/>
</dbReference>
<dbReference type="PANTHER" id="PTHR43793">
    <property type="entry name" value="FAD SYNTHASE"/>
    <property type="match status" value="1"/>
</dbReference>
<dbReference type="PANTHER" id="PTHR43793:SF1">
    <property type="entry name" value="FAD SYNTHASE"/>
    <property type="match status" value="1"/>
</dbReference>
<dbReference type="Pfam" id="PF01467">
    <property type="entry name" value="CTP_transf_like"/>
    <property type="match status" value="1"/>
</dbReference>
<dbReference type="SUPFAM" id="SSF52374">
    <property type="entry name" value="Nucleotidylyl transferase"/>
    <property type="match status" value="1"/>
</dbReference>